<proteinExistence type="inferred from homology"/>
<name>MUTS_PARP8</name>
<accession>B2JIT0</accession>
<keyword id="KW-0067">ATP-binding</keyword>
<keyword id="KW-0227">DNA damage</keyword>
<keyword id="KW-0234">DNA repair</keyword>
<keyword id="KW-0238">DNA-binding</keyword>
<keyword id="KW-0547">Nucleotide-binding</keyword>
<keyword id="KW-1185">Reference proteome</keyword>
<feature type="chain" id="PRO_1000093612" description="DNA mismatch repair protein MutS">
    <location>
        <begin position="1"/>
        <end position="892"/>
    </location>
</feature>
<feature type="binding site" evidence="1">
    <location>
        <begin position="634"/>
        <end position="641"/>
    </location>
    <ligand>
        <name>ATP</name>
        <dbReference type="ChEBI" id="CHEBI:30616"/>
    </ligand>
</feature>
<gene>
    <name evidence="1" type="primary">mutS</name>
    <name type="ordered locus">Bphy_1399</name>
</gene>
<dbReference type="EMBL" id="CP001043">
    <property type="protein sequence ID" value="ACC70581.1"/>
    <property type="molecule type" value="Genomic_DNA"/>
</dbReference>
<dbReference type="RefSeq" id="WP_012400795.1">
    <property type="nucleotide sequence ID" value="NC_010622.1"/>
</dbReference>
<dbReference type="SMR" id="B2JIT0"/>
<dbReference type="STRING" id="391038.Bphy_1399"/>
<dbReference type="KEGG" id="bph:Bphy_1399"/>
<dbReference type="eggNOG" id="COG0249">
    <property type="taxonomic scope" value="Bacteria"/>
</dbReference>
<dbReference type="HOGENOM" id="CLU_002472_3_1_4"/>
<dbReference type="OrthoDB" id="9802448at2"/>
<dbReference type="Proteomes" id="UP000001192">
    <property type="component" value="Chromosome 1"/>
</dbReference>
<dbReference type="GO" id="GO:0005829">
    <property type="term" value="C:cytosol"/>
    <property type="evidence" value="ECO:0007669"/>
    <property type="project" value="TreeGrafter"/>
</dbReference>
<dbReference type="GO" id="GO:0005524">
    <property type="term" value="F:ATP binding"/>
    <property type="evidence" value="ECO:0007669"/>
    <property type="project" value="UniProtKB-UniRule"/>
</dbReference>
<dbReference type="GO" id="GO:0140664">
    <property type="term" value="F:ATP-dependent DNA damage sensor activity"/>
    <property type="evidence" value="ECO:0007669"/>
    <property type="project" value="InterPro"/>
</dbReference>
<dbReference type="GO" id="GO:0003684">
    <property type="term" value="F:damaged DNA binding"/>
    <property type="evidence" value="ECO:0007669"/>
    <property type="project" value="UniProtKB-UniRule"/>
</dbReference>
<dbReference type="GO" id="GO:0030983">
    <property type="term" value="F:mismatched DNA binding"/>
    <property type="evidence" value="ECO:0007669"/>
    <property type="project" value="InterPro"/>
</dbReference>
<dbReference type="GO" id="GO:0006298">
    <property type="term" value="P:mismatch repair"/>
    <property type="evidence" value="ECO:0007669"/>
    <property type="project" value="UniProtKB-UniRule"/>
</dbReference>
<dbReference type="CDD" id="cd03284">
    <property type="entry name" value="ABC_MutS1"/>
    <property type="match status" value="1"/>
</dbReference>
<dbReference type="FunFam" id="3.40.1170.10:FF:000001">
    <property type="entry name" value="DNA mismatch repair protein MutS"/>
    <property type="match status" value="1"/>
</dbReference>
<dbReference type="FunFam" id="3.40.50.300:FF:000870">
    <property type="entry name" value="MutS protein homolog 4"/>
    <property type="match status" value="1"/>
</dbReference>
<dbReference type="Gene3D" id="1.10.1420.10">
    <property type="match status" value="2"/>
</dbReference>
<dbReference type="Gene3D" id="6.10.140.430">
    <property type="match status" value="1"/>
</dbReference>
<dbReference type="Gene3D" id="3.40.1170.10">
    <property type="entry name" value="DNA repair protein MutS, domain I"/>
    <property type="match status" value="1"/>
</dbReference>
<dbReference type="Gene3D" id="3.30.420.110">
    <property type="entry name" value="MutS, connector domain"/>
    <property type="match status" value="1"/>
</dbReference>
<dbReference type="Gene3D" id="3.40.50.300">
    <property type="entry name" value="P-loop containing nucleotide triphosphate hydrolases"/>
    <property type="match status" value="1"/>
</dbReference>
<dbReference type="HAMAP" id="MF_00096">
    <property type="entry name" value="MutS"/>
    <property type="match status" value="1"/>
</dbReference>
<dbReference type="InterPro" id="IPR005748">
    <property type="entry name" value="DNA_mismatch_repair_MutS"/>
</dbReference>
<dbReference type="InterPro" id="IPR007695">
    <property type="entry name" value="DNA_mismatch_repair_MutS-lik_N"/>
</dbReference>
<dbReference type="InterPro" id="IPR017261">
    <property type="entry name" value="DNA_mismatch_repair_MutS/MSH"/>
</dbReference>
<dbReference type="InterPro" id="IPR000432">
    <property type="entry name" value="DNA_mismatch_repair_MutS_C"/>
</dbReference>
<dbReference type="InterPro" id="IPR007861">
    <property type="entry name" value="DNA_mismatch_repair_MutS_clamp"/>
</dbReference>
<dbReference type="InterPro" id="IPR007696">
    <property type="entry name" value="DNA_mismatch_repair_MutS_core"/>
</dbReference>
<dbReference type="InterPro" id="IPR016151">
    <property type="entry name" value="DNA_mismatch_repair_MutS_N"/>
</dbReference>
<dbReference type="InterPro" id="IPR036187">
    <property type="entry name" value="DNA_mismatch_repair_MutS_sf"/>
</dbReference>
<dbReference type="InterPro" id="IPR007860">
    <property type="entry name" value="DNA_mmatch_repair_MutS_con_dom"/>
</dbReference>
<dbReference type="InterPro" id="IPR045076">
    <property type="entry name" value="MutS"/>
</dbReference>
<dbReference type="InterPro" id="IPR036678">
    <property type="entry name" value="MutS_con_dom_sf"/>
</dbReference>
<dbReference type="InterPro" id="IPR027417">
    <property type="entry name" value="P-loop_NTPase"/>
</dbReference>
<dbReference type="NCBIfam" id="TIGR01070">
    <property type="entry name" value="mutS1"/>
    <property type="match status" value="1"/>
</dbReference>
<dbReference type="NCBIfam" id="NF003810">
    <property type="entry name" value="PRK05399.1"/>
    <property type="match status" value="1"/>
</dbReference>
<dbReference type="PANTHER" id="PTHR11361:SF34">
    <property type="entry name" value="DNA MISMATCH REPAIR PROTEIN MSH1, MITOCHONDRIAL"/>
    <property type="match status" value="1"/>
</dbReference>
<dbReference type="PANTHER" id="PTHR11361">
    <property type="entry name" value="DNA MISMATCH REPAIR PROTEIN MUTS FAMILY MEMBER"/>
    <property type="match status" value="1"/>
</dbReference>
<dbReference type="Pfam" id="PF01624">
    <property type="entry name" value="MutS_I"/>
    <property type="match status" value="1"/>
</dbReference>
<dbReference type="Pfam" id="PF05188">
    <property type="entry name" value="MutS_II"/>
    <property type="match status" value="1"/>
</dbReference>
<dbReference type="Pfam" id="PF05192">
    <property type="entry name" value="MutS_III"/>
    <property type="match status" value="1"/>
</dbReference>
<dbReference type="Pfam" id="PF05190">
    <property type="entry name" value="MutS_IV"/>
    <property type="match status" value="1"/>
</dbReference>
<dbReference type="Pfam" id="PF00488">
    <property type="entry name" value="MutS_V"/>
    <property type="match status" value="1"/>
</dbReference>
<dbReference type="PIRSF" id="PIRSF037677">
    <property type="entry name" value="DNA_mis_repair_Msh6"/>
    <property type="match status" value="1"/>
</dbReference>
<dbReference type="SMART" id="SM00534">
    <property type="entry name" value="MUTSac"/>
    <property type="match status" value="1"/>
</dbReference>
<dbReference type="SMART" id="SM00533">
    <property type="entry name" value="MUTSd"/>
    <property type="match status" value="1"/>
</dbReference>
<dbReference type="SUPFAM" id="SSF55271">
    <property type="entry name" value="DNA repair protein MutS, domain I"/>
    <property type="match status" value="1"/>
</dbReference>
<dbReference type="SUPFAM" id="SSF53150">
    <property type="entry name" value="DNA repair protein MutS, domain II"/>
    <property type="match status" value="1"/>
</dbReference>
<dbReference type="SUPFAM" id="SSF48334">
    <property type="entry name" value="DNA repair protein MutS, domain III"/>
    <property type="match status" value="1"/>
</dbReference>
<dbReference type="SUPFAM" id="SSF52540">
    <property type="entry name" value="P-loop containing nucleoside triphosphate hydrolases"/>
    <property type="match status" value="1"/>
</dbReference>
<dbReference type="PROSITE" id="PS00486">
    <property type="entry name" value="DNA_MISMATCH_REPAIR_2"/>
    <property type="match status" value="1"/>
</dbReference>
<reference key="1">
    <citation type="journal article" date="2014" name="Stand. Genomic Sci.">
        <title>Complete genome sequence of Burkholderia phymatum STM815(T), a broad host range and efficient nitrogen-fixing symbiont of Mimosa species.</title>
        <authorList>
            <person name="Moulin L."/>
            <person name="Klonowska A."/>
            <person name="Caroline B."/>
            <person name="Booth K."/>
            <person name="Vriezen J.A."/>
            <person name="Melkonian R."/>
            <person name="James E.K."/>
            <person name="Young J.P."/>
            <person name="Bena G."/>
            <person name="Hauser L."/>
            <person name="Land M."/>
            <person name="Kyrpides N."/>
            <person name="Bruce D."/>
            <person name="Chain P."/>
            <person name="Copeland A."/>
            <person name="Pitluck S."/>
            <person name="Woyke T."/>
            <person name="Lizotte-Waniewski M."/>
            <person name="Bristow J."/>
            <person name="Riley M."/>
        </authorList>
    </citation>
    <scope>NUCLEOTIDE SEQUENCE [LARGE SCALE GENOMIC DNA]</scope>
    <source>
        <strain>DSM 17167 / CIP 108236 / LMG 21445 / STM815</strain>
    </source>
</reference>
<organism>
    <name type="scientific">Paraburkholderia phymatum (strain DSM 17167 / CIP 108236 / LMG 21445 / STM815)</name>
    <name type="common">Burkholderia phymatum</name>
    <dbReference type="NCBI Taxonomy" id="391038"/>
    <lineage>
        <taxon>Bacteria</taxon>
        <taxon>Pseudomonadati</taxon>
        <taxon>Pseudomonadota</taxon>
        <taxon>Betaproteobacteria</taxon>
        <taxon>Burkholderiales</taxon>
        <taxon>Burkholderiaceae</taxon>
        <taxon>Paraburkholderia</taxon>
    </lineage>
</organism>
<comment type="function">
    <text evidence="1">This protein is involved in the repair of mismatches in DNA. It is possible that it carries out the mismatch recognition step. This protein has a weak ATPase activity.</text>
</comment>
<comment type="similarity">
    <text evidence="1">Belongs to the DNA mismatch repair MutS family.</text>
</comment>
<sequence length="892" mass="96589">MGTQTAAASDIAQHTPMMQQYLRIKGEHPGTLVFYRMGDFYELFFDDAEKAARLLDLTLTQRGASGGNPIKMAGVPHHAVEQYLAKLVKLGESVAICEQIGDPATSKGPVERKVVRVVTPGTLTDAALLSDKSDTYLLAACAGHNRRGVVTTVGLAWLNLASGALRLAEVAPDQVAAALERIRPAEILVADAPSSSDANAWSVPTGFGATTRVPLWHFDVASGTQRLCDQLEVAGLDGFGAHSLTCACGAAGALLLYAAATQGQQLRHVRSLKVEYESEYIGLDPSTRRNLELTETLRGTDSPTLCSLLDTCCTTMGSRLLRHWLHHPPRDASFAQARQQAIGALLDSPPQASLDALCGALRQISDIERITGRLALLSARPRDLSSLRDTFIALPELRAQLVPLTGAADSLARIHASLEPPADCVDLLTRAVAQEPAAMIRDGGVIARGYDVDLDELRDISENCGQFLIDLETRERARTGIGNLRVEYNKVHGFYIEVTRGQTDKVPDDYRRRQTLKNAERYITPELKTFEDKALSAQERALAREKALYDALLQSLLPFIADCQRVASALAELDLLAAFAERARALDWVAPNFSATGGIDIEQGRHPVVEAQVEQFIANDCMLNPERKLLLITGPNMGGKSTFMRQTALIALMAYVGSYVPARRASFGPIDRIFTRIGAADDLAGGRSTFMVEMTEAAAILNDATPQSLVLMDEIGRGTSTFDGLALAWAIARHLLAHNGCHTLFATHYFELTQLPAEFPHAANVHLSAVEHGHGIVFLHAVNEGPANQSYGLQVAQLAGVPNAVIRAARKHLAYLEQQSAGAPAPQLDLFSAPVAMLEDADDESIAPALDAATRTLVERLRDIDPNDLRPRDALDLLYELHELAKSPDAPR</sequence>
<evidence type="ECO:0000255" key="1">
    <source>
        <dbReference type="HAMAP-Rule" id="MF_00096"/>
    </source>
</evidence>
<protein>
    <recommendedName>
        <fullName evidence="1">DNA mismatch repair protein MutS</fullName>
    </recommendedName>
</protein>